<evidence type="ECO:0000255" key="1">
    <source>
        <dbReference type="HAMAP-Rule" id="MF_01864"/>
    </source>
</evidence>
<evidence type="ECO:0000255" key="2">
    <source>
        <dbReference type="PROSITE-ProRule" id="PRU01266"/>
    </source>
</evidence>
<keyword id="KW-0004">4Fe-4S</keyword>
<keyword id="KW-0963">Cytoplasm</keyword>
<keyword id="KW-0408">Iron</keyword>
<keyword id="KW-0411">Iron-sulfur</keyword>
<keyword id="KW-0479">Metal-binding</keyword>
<keyword id="KW-0949">S-adenosyl-L-methionine</keyword>
<keyword id="KW-0808">Transferase</keyword>
<keyword id="KW-0819">tRNA processing</keyword>
<name>MIAB_SHEB9</name>
<dbReference type="EC" id="2.8.4.3" evidence="1"/>
<dbReference type="EMBL" id="CP000891">
    <property type="protein sequence ID" value="ABX50601.1"/>
    <property type="molecule type" value="Genomic_DNA"/>
</dbReference>
<dbReference type="RefSeq" id="WP_006082739.1">
    <property type="nucleotide sequence ID" value="NC_009997.1"/>
</dbReference>
<dbReference type="SMR" id="A9KZZ3"/>
<dbReference type="GeneID" id="11773487"/>
<dbReference type="KEGG" id="sbn:Sbal195_3439"/>
<dbReference type="HOGENOM" id="CLU_018697_2_0_6"/>
<dbReference type="Proteomes" id="UP000000770">
    <property type="component" value="Chromosome"/>
</dbReference>
<dbReference type="GO" id="GO:0005829">
    <property type="term" value="C:cytosol"/>
    <property type="evidence" value="ECO:0007669"/>
    <property type="project" value="TreeGrafter"/>
</dbReference>
<dbReference type="GO" id="GO:0051539">
    <property type="term" value="F:4 iron, 4 sulfur cluster binding"/>
    <property type="evidence" value="ECO:0007669"/>
    <property type="project" value="UniProtKB-UniRule"/>
</dbReference>
<dbReference type="GO" id="GO:0046872">
    <property type="term" value="F:metal ion binding"/>
    <property type="evidence" value="ECO:0007669"/>
    <property type="project" value="UniProtKB-KW"/>
</dbReference>
<dbReference type="GO" id="GO:0035597">
    <property type="term" value="F:N6-isopentenyladenosine methylthiotransferase activity"/>
    <property type="evidence" value="ECO:0007669"/>
    <property type="project" value="TreeGrafter"/>
</dbReference>
<dbReference type="CDD" id="cd01335">
    <property type="entry name" value="Radical_SAM"/>
    <property type="match status" value="1"/>
</dbReference>
<dbReference type="FunFam" id="3.40.50.12160:FF:000001">
    <property type="entry name" value="tRNA-2-methylthio-N(6)-dimethylallyladenosine synthase"/>
    <property type="match status" value="1"/>
</dbReference>
<dbReference type="FunFam" id="3.80.30.20:FF:000001">
    <property type="entry name" value="tRNA-2-methylthio-N(6)-dimethylallyladenosine synthase 2"/>
    <property type="match status" value="1"/>
</dbReference>
<dbReference type="Gene3D" id="3.40.50.12160">
    <property type="entry name" value="Methylthiotransferase, N-terminal domain"/>
    <property type="match status" value="1"/>
</dbReference>
<dbReference type="Gene3D" id="3.80.30.20">
    <property type="entry name" value="tm_1862 like domain"/>
    <property type="match status" value="1"/>
</dbReference>
<dbReference type="HAMAP" id="MF_01864">
    <property type="entry name" value="tRNA_metthiotr_MiaB"/>
    <property type="match status" value="1"/>
</dbReference>
<dbReference type="InterPro" id="IPR006638">
    <property type="entry name" value="Elp3/MiaA/NifB-like_rSAM"/>
</dbReference>
<dbReference type="InterPro" id="IPR005839">
    <property type="entry name" value="Methylthiotransferase"/>
</dbReference>
<dbReference type="InterPro" id="IPR020612">
    <property type="entry name" value="Methylthiotransferase_CS"/>
</dbReference>
<dbReference type="InterPro" id="IPR013848">
    <property type="entry name" value="Methylthiotransferase_N"/>
</dbReference>
<dbReference type="InterPro" id="IPR038135">
    <property type="entry name" value="Methylthiotransferase_N_sf"/>
</dbReference>
<dbReference type="InterPro" id="IPR006463">
    <property type="entry name" value="MiaB_methiolase"/>
</dbReference>
<dbReference type="InterPro" id="IPR007197">
    <property type="entry name" value="rSAM"/>
</dbReference>
<dbReference type="InterPro" id="IPR023404">
    <property type="entry name" value="rSAM_horseshoe"/>
</dbReference>
<dbReference type="InterPro" id="IPR002792">
    <property type="entry name" value="TRAM_dom"/>
</dbReference>
<dbReference type="NCBIfam" id="TIGR01574">
    <property type="entry name" value="miaB-methiolase"/>
    <property type="match status" value="1"/>
</dbReference>
<dbReference type="NCBIfam" id="TIGR00089">
    <property type="entry name" value="MiaB/RimO family radical SAM methylthiotransferase"/>
    <property type="match status" value="1"/>
</dbReference>
<dbReference type="PANTHER" id="PTHR43020">
    <property type="entry name" value="CDK5 REGULATORY SUBUNIT-ASSOCIATED PROTEIN 1"/>
    <property type="match status" value="1"/>
</dbReference>
<dbReference type="PANTHER" id="PTHR43020:SF2">
    <property type="entry name" value="MITOCHONDRIAL TRNA METHYLTHIOTRANSFERASE CDK5RAP1"/>
    <property type="match status" value="1"/>
</dbReference>
<dbReference type="Pfam" id="PF04055">
    <property type="entry name" value="Radical_SAM"/>
    <property type="match status" value="1"/>
</dbReference>
<dbReference type="Pfam" id="PF01938">
    <property type="entry name" value="TRAM"/>
    <property type="match status" value="1"/>
</dbReference>
<dbReference type="Pfam" id="PF00919">
    <property type="entry name" value="UPF0004"/>
    <property type="match status" value="1"/>
</dbReference>
<dbReference type="SFLD" id="SFLDF00273">
    <property type="entry name" value="(dimethylallyl)adenosine_tRNA"/>
    <property type="match status" value="1"/>
</dbReference>
<dbReference type="SFLD" id="SFLDG01082">
    <property type="entry name" value="B12-binding_domain_containing"/>
    <property type="match status" value="1"/>
</dbReference>
<dbReference type="SFLD" id="SFLDG01061">
    <property type="entry name" value="methylthiotransferase"/>
    <property type="match status" value="1"/>
</dbReference>
<dbReference type="SMART" id="SM00729">
    <property type="entry name" value="Elp3"/>
    <property type="match status" value="1"/>
</dbReference>
<dbReference type="SUPFAM" id="SSF102114">
    <property type="entry name" value="Radical SAM enzymes"/>
    <property type="match status" value="1"/>
</dbReference>
<dbReference type="PROSITE" id="PS51449">
    <property type="entry name" value="MTTASE_N"/>
    <property type="match status" value="1"/>
</dbReference>
<dbReference type="PROSITE" id="PS01278">
    <property type="entry name" value="MTTASE_RADICAL"/>
    <property type="match status" value="1"/>
</dbReference>
<dbReference type="PROSITE" id="PS51918">
    <property type="entry name" value="RADICAL_SAM"/>
    <property type="match status" value="1"/>
</dbReference>
<dbReference type="PROSITE" id="PS50926">
    <property type="entry name" value="TRAM"/>
    <property type="match status" value="1"/>
</dbReference>
<accession>A9KZZ3</accession>
<sequence>MSKKLHIKTWGCQMNEYDSSKMADLLGEYQGYTLTEEASEADILLLNTCSIREKAQEKVFHQLGRWKTLKDKNPNLIIGVGGCVASQEGKAIKDRAQCVDIIFGPQTLHRLPEMIEQVRRGDKAVIDISFPEIEKFDRLPEPRAEGPTAFVSIMEGCSKYCSFCVVPYTRGEEVSRPSDDIILEIAQLAEQGVREVNLLGQNVNAYRGATHDGAICTFAELLRFVAAIDGIDRIRFTTSHPIEFTQDIIDVYEDTPELVSFLHLPVQSGSDRILTAMKRGHMAIEYKSIIRRLRKAREGIQISSDFIIGFPGETKEDFADTMKLIEDIGFDHSFSFIYSARPGTPAADLPDNVDMEEKKQRLAILQDRITQQAMRYSRHMMGTVQRILVEGPSVKNPMELRGRTENNRVVNFEGQPKHIGTFVDVEIVDVYTNSLRGVFIRGEDEMDLRRSLRPAEILAKRKQDDELGVTQFKP</sequence>
<feature type="chain" id="PRO_0000374536" description="tRNA-2-methylthio-N(6)-dimethylallyladenosine synthase">
    <location>
        <begin position="1"/>
        <end position="474"/>
    </location>
</feature>
<feature type="domain" description="MTTase N-terminal" evidence="1">
    <location>
        <begin position="3"/>
        <end position="120"/>
    </location>
</feature>
<feature type="domain" description="Radical SAM core" evidence="2">
    <location>
        <begin position="143"/>
        <end position="375"/>
    </location>
</feature>
<feature type="domain" description="TRAM" evidence="1">
    <location>
        <begin position="378"/>
        <end position="441"/>
    </location>
</feature>
<feature type="binding site" evidence="1">
    <location>
        <position position="12"/>
    </location>
    <ligand>
        <name>[4Fe-4S] cluster</name>
        <dbReference type="ChEBI" id="CHEBI:49883"/>
        <label>1</label>
    </ligand>
</feature>
<feature type="binding site" evidence="1">
    <location>
        <position position="49"/>
    </location>
    <ligand>
        <name>[4Fe-4S] cluster</name>
        <dbReference type="ChEBI" id="CHEBI:49883"/>
        <label>1</label>
    </ligand>
</feature>
<feature type="binding site" evidence="1">
    <location>
        <position position="83"/>
    </location>
    <ligand>
        <name>[4Fe-4S] cluster</name>
        <dbReference type="ChEBI" id="CHEBI:49883"/>
        <label>1</label>
    </ligand>
</feature>
<feature type="binding site" evidence="1">
    <location>
        <position position="157"/>
    </location>
    <ligand>
        <name>[4Fe-4S] cluster</name>
        <dbReference type="ChEBI" id="CHEBI:49883"/>
        <label>2</label>
        <note>4Fe-4S-S-AdoMet</note>
    </ligand>
</feature>
<feature type="binding site" evidence="1">
    <location>
        <position position="161"/>
    </location>
    <ligand>
        <name>[4Fe-4S] cluster</name>
        <dbReference type="ChEBI" id="CHEBI:49883"/>
        <label>2</label>
        <note>4Fe-4S-S-AdoMet</note>
    </ligand>
</feature>
<feature type="binding site" evidence="1">
    <location>
        <position position="164"/>
    </location>
    <ligand>
        <name>[4Fe-4S] cluster</name>
        <dbReference type="ChEBI" id="CHEBI:49883"/>
        <label>2</label>
        <note>4Fe-4S-S-AdoMet</note>
    </ligand>
</feature>
<gene>
    <name evidence="1" type="primary">miaB</name>
    <name type="ordered locus">Sbal195_3439</name>
</gene>
<protein>
    <recommendedName>
        <fullName evidence="1">tRNA-2-methylthio-N(6)-dimethylallyladenosine synthase</fullName>
        <ecNumber evidence="1">2.8.4.3</ecNumber>
    </recommendedName>
    <alternativeName>
        <fullName evidence="1">(Dimethylallyl)adenosine tRNA methylthiotransferase MiaB</fullName>
    </alternativeName>
    <alternativeName>
        <fullName evidence="1">tRNA-i(6)A37 methylthiotransferase</fullName>
    </alternativeName>
</protein>
<comment type="function">
    <text evidence="1">Catalyzes the methylthiolation of N6-(dimethylallyl)adenosine (i(6)A), leading to the formation of 2-methylthio-N6-(dimethylallyl)adenosine (ms(2)i(6)A) at position 37 in tRNAs that read codons beginning with uridine.</text>
</comment>
<comment type="catalytic activity">
    <reaction evidence="1">
        <text>N(6)-dimethylallyladenosine(37) in tRNA + (sulfur carrier)-SH + AH2 + 2 S-adenosyl-L-methionine = 2-methylsulfanyl-N(6)-dimethylallyladenosine(37) in tRNA + (sulfur carrier)-H + 5'-deoxyadenosine + L-methionine + A + S-adenosyl-L-homocysteine + 2 H(+)</text>
        <dbReference type="Rhea" id="RHEA:37067"/>
        <dbReference type="Rhea" id="RHEA-COMP:10375"/>
        <dbReference type="Rhea" id="RHEA-COMP:10376"/>
        <dbReference type="Rhea" id="RHEA-COMP:14737"/>
        <dbReference type="Rhea" id="RHEA-COMP:14739"/>
        <dbReference type="ChEBI" id="CHEBI:13193"/>
        <dbReference type="ChEBI" id="CHEBI:15378"/>
        <dbReference type="ChEBI" id="CHEBI:17319"/>
        <dbReference type="ChEBI" id="CHEBI:17499"/>
        <dbReference type="ChEBI" id="CHEBI:29917"/>
        <dbReference type="ChEBI" id="CHEBI:57844"/>
        <dbReference type="ChEBI" id="CHEBI:57856"/>
        <dbReference type="ChEBI" id="CHEBI:59789"/>
        <dbReference type="ChEBI" id="CHEBI:64428"/>
        <dbReference type="ChEBI" id="CHEBI:74415"/>
        <dbReference type="ChEBI" id="CHEBI:74417"/>
        <dbReference type="EC" id="2.8.4.3"/>
    </reaction>
</comment>
<comment type="cofactor">
    <cofactor evidence="1">
        <name>[4Fe-4S] cluster</name>
        <dbReference type="ChEBI" id="CHEBI:49883"/>
    </cofactor>
    <text evidence="1">Binds 2 [4Fe-4S] clusters. One cluster is coordinated with 3 cysteines and an exchangeable S-adenosyl-L-methionine.</text>
</comment>
<comment type="subunit">
    <text evidence="1">Monomer.</text>
</comment>
<comment type="subcellular location">
    <subcellularLocation>
        <location evidence="1">Cytoplasm</location>
    </subcellularLocation>
</comment>
<comment type="similarity">
    <text evidence="1">Belongs to the methylthiotransferase family. MiaB subfamily.</text>
</comment>
<reference key="1">
    <citation type="submission" date="2007-11" db="EMBL/GenBank/DDBJ databases">
        <title>Complete sequence of chromosome of Shewanella baltica OS195.</title>
        <authorList>
            <consortium name="US DOE Joint Genome Institute"/>
            <person name="Copeland A."/>
            <person name="Lucas S."/>
            <person name="Lapidus A."/>
            <person name="Barry K."/>
            <person name="Glavina del Rio T."/>
            <person name="Dalin E."/>
            <person name="Tice H."/>
            <person name="Pitluck S."/>
            <person name="Chain P."/>
            <person name="Malfatti S."/>
            <person name="Shin M."/>
            <person name="Vergez L."/>
            <person name="Schmutz J."/>
            <person name="Larimer F."/>
            <person name="Land M."/>
            <person name="Hauser L."/>
            <person name="Kyrpides N."/>
            <person name="Kim E."/>
            <person name="Brettar I."/>
            <person name="Rodrigues J."/>
            <person name="Konstantinidis K."/>
            <person name="Klappenbach J."/>
            <person name="Hofle M."/>
            <person name="Tiedje J."/>
            <person name="Richardson P."/>
        </authorList>
    </citation>
    <scope>NUCLEOTIDE SEQUENCE [LARGE SCALE GENOMIC DNA]</scope>
    <source>
        <strain>OS195</strain>
    </source>
</reference>
<proteinExistence type="inferred from homology"/>
<organism>
    <name type="scientific">Shewanella baltica (strain OS195)</name>
    <dbReference type="NCBI Taxonomy" id="399599"/>
    <lineage>
        <taxon>Bacteria</taxon>
        <taxon>Pseudomonadati</taxon>
        <taxon>Pseudomonadota</taxon>
        <taxon>Gammaproteobacteria</taxon>
        <taxon>Alteromonadales</taxon>
        <taxon>Shewanellaceae</taxon>
        <taxon>Shewanella</taxon>
    </lineage>
</organism>